<name>RL37A_RAT</name>
<comment type="function">
    <text evidence="2">Component of the large ribosomal subunit. The ribosome is a large ribonucleoprotein complex responsible for the synthesis of proteins in the cell.</text>
</comment>
<comment type="subunit">
    <text evidence="2">Component of the large ribosomal subunit.</text>
</comment>
<comment type="subcellular location">
    <subcellularLocation>
        <location evidence="2">Cytoplasm</location>
    </subcellularLocation>
</comment>
<comment type="similarity">
    <text evidence="4">Belongs to the eukaryotic ribosomal protein eL43 family.</text>
</comment>
<comment type="caution">
    <text evidence="4">This gene has been duplicated in rat. This copy on chromosome 9 corresponds to the active gene while the copy on chromosome 5 is a pseudogene.</text>
</comment>
<feature type="initiator methionine" description="Removed" evidence="3">
    <location>
        <position position="1"/>
    </location>
</feature>
<feature type="chain" id="PRO_0000139819" description="Large ribosomal subunit protein eL43">
    <location>
        <begin position="2"/>
        <end position="92"/>
    </location>
</feature>
<feature type="zinc finger region" description="C4-type">
    <location>
        <begin position="39"/>
        <end position="60"/>
    </location>
</feature>
<feature type="binding site" evidence="1">
    <location>
        <position position="39"/>
    </location>
    <ligand>
        <name>Zn(2+)</name>
        <dbReference type="ChEBI" id="CHEBI:29105"/>
    </ligand>
</feature>
<feature type="binding site" evidence="1">
    <location>
        <position position="42"/>
    </location>
    <ligand>
        <name>Zn(2+)</name>
        <dbReference type="ChEBI" id="CHEBI:29105"/>
    </ligand>
</feature>
<feature type="binding site" evidence="1">
    <location>
        <position position="57"/>
    </location>
    <ligand>
        <name>Zn(2+)</name>
        <dbReference type="ChEBI" id="CHEBI:29105"/>
    </ligand>
</feature>
<feature type="binding site" evidence="1">
    <location>
        <position position="60"/>
    </location>
    <ligand>
        <name>Zn(2+)</name>
        <dbReference type="ChEBI" id="CHEBI:29105"/>
    </ligand>
</feature>
<organism>
    <name type="scientific">Rattus norvegicus</name>
    <name type="common">Rat</name>
    <dbReference type="NCBI Taxonomy" id="10116"/>
    <lineage>
        <taxon>Eukaryota</taxon>
        <taxon>Metazoa</taxon>
        <taxon>Chordata</taxon>
        <taxon>Craniata</taxon>
        <taxon>Vertebrata</taxon>
        <taxon>Euteleostomi</taxon>
        <taxon>Mammalia</taxon>
        <taxon>Eutheria</taxon>
        <taxon>Euarchontoglires</taxon>
        <taxon>Glires</taxon>
        <taxon>Rodentia</taxon>
        <taxon>Myomorpha</taxon>
        <taxon>Muroidea</taxon>
        <taxon>Muridae</taxon>
        <taxon>Murinae</taxon>
        <taxon>Rattus</taxon>
    </lineage>
</organism>
<keyword id="KW-0963">Cytoplasm</keyword>
<keyword id="KW-0903">Direct protein sequencing</keyword>
<keyword id="KW-0479">Metal-binding</keyword>
<keyword id="KW-1185">Reference proteome</keyword>
<keyword id="KW-0687">Ribonucleoprotein</keyword>
<keyword id="KW-0689">Ribosomal protein</keyword>
<keyword id="KW-0862">Zinc</keyword>
<keyword id="KW-0863">Zinc-finger</keyword>
<proteinExistence type="evidence at protein level"/>
<protein>
    <recommendedName>
        <fullName evidence="4">Large ribosomal subunit protein eL43</fullName>
    </recommendedName>
    <alternativeName>
        <fullName>60S ribosomal protein L37a</fullName>
    </alternativeName>
</protein>
<accession>P61515</accession>
<accession>P12751</accession>
<dbReference type="EMBL" id="X14069">
    <property type="protein sequence ID" value="CAA32232.1"/>
    <property type="molecule type" value="mRNA"/>
</dbReference>
<dbReference type="EMBL" id="BC088285">
    <property type="status" value="NOT_ANNOTATED_CDS"/>
    <property type="molecule type" value="mRNA"/>
</dbReference>
<dbReference type="PIR" id="S05014">
    <property type="entry name" value="R5RT37"/>
</dbReference>
<dbReference type="RefSeq" id="NP_001192247.2">
    <property type="nucleotide sequence ID" value="NM_001205318.2"/>
</dbReference>
<dbReference type="SMR" id="P61515"/>
<dbReference type="FunCoup" id="P61515">
    <property type="interactions" value="1878"/>
</dbReference>
<dbReference type="IntAct" id="P61515">
    <property type="interactions" value="1"/>
</dbReference>
<dbReference type="STRING" id="10116.ENSRNOP00000033369"/>
<dbReference type="PhosphoSitePlus" id="P61515"/>
<dbReference type="jPOST" id="P61515"/>
<dbReference type="PaxDb" id="10116-ENSRNOP00000047513"/>
<dbReference type="GeneID" id="363248"/>
<dbReference type="AGR" id="RGD:2319947"/>
<dbReference type="AGR" id="RGD:40992504"/>
<dbReference type="RGD" id="2319947">
    <property type="gene designation" value="Rpl37a"/>
</dbReference>
<dbReference type="eggNOG" id="KOG0402">
    <property type="taxonomic scope" value="Eukaryota"/>
</dbReference>
<dbReference type="InParanoid" id="P61515"/>
<dbReference type="OrthoDB" id="10258345at2759"/>
<dbReference type="PhylomeDB" id="P61515"/>
<dbReference type="CD-CODE" id="34881ED2">
    <property type="entry name" value="Nucleolus"/>
</dbReference>
<dbReference type="PRO" id="PR:P61515"/>
<dbReference type="Proteomes" id="UP000002494">
    <property type="component" value="Unplaced"/>
</dbReference>
<dbReference type="GO" id="GO:0005737">
    <property type="term" value="C:cytoplasm"/>
    <property type="evidence" value="ECO:0000266"/>
    <property type="project" value="RGD"/>
</dbReference>
<dbReference type="GO" id="GO:0022625">
    <property type="term" value="C:cytosolic large ribosomal subunit"/>
    <property type="evidence" value="ECO:0000314"/>
    <property type="project" value="RGD"/>
</dbReference>
<dbReference type="GO" id="GO:0022626">
    <property type="term" value="C:cytosolic ribosome"/>
    <property type="evidence" value="ECO:0000266"/>
    <property type="project" value="RGD"/>
</dbReference>
<dbReference type="GO" id="GO:0045202">
    <property type="term" value="C:synapse"/>
    <property type="evidence" value="ECO:0000266"/>
    <property type="project" value="RGD"/>
</dbReference>
<dbReference type="GO" id="GO:0070180">
    <property type="term" value="F:large ribosomal subunit rRNA binding"/>
    <property type="evidence" value="ECO:0000314"/>
    <property type="project" value="RGD"/>
</dbReference>
<dbReference type="GO" id="GO:0003735">
    <property type="term" value="F:structural constituent of ribosome"/>
    <property type="evidence" value="ECO:0000266"/>
    <property type="project" value="RGD"/>
</dbReference>
<dbReference type="GO" id="GO:0008270">
    <property type="term" value="F:zinc ion binding"/>
    <property type="evidence" value="ECO:0007669"/>
    <property type="project" value="UniProtKB-KW"/>
</dbReference>
<dbReference type="GO" id="GO:0006412">
    <property type="term" value="P:translation"/>
    <property type="evidence" value="ECO:0007669"/>
    <property type="project" value="InterPro"/>
</dbReference>
<dbReference type="FunFam" id="2.20.25.30:FF:000002">
    <property type="entry name" value="60S ribosomal protein L37a"/>
    <property type="match status" value="1"/>
</dbReference>
<dbReference type="Gene3D" id="2.20.25.30">
    <property type="match status" value="1"/>
</dbReference>
<dbReference type="HAMAP" id="MF_00327">
    <property type="entry name" value="Ribosomal_eL43"/>
    <property type="match status" value="1"/>
</dbReference>
<dbReference type="InterPro" id="IPR011331">
    <property type="entry name" value="Ribosomal_eL37/eL43"/>
</dbReference>
<dbReference type="InterPro" id="IPR002674">
    <property type="entry name" value="Ribosomal_eL43"/>
</dbReference>
<dbReference type="InterPro" id="IPR011332">
    <property type="entry name" value="Ribosomal_zn-bd"/>
</dbReference>
<dbReference type="NCBIfam" id="TIGR00280">
    <property type="entry name" value="eL43_euk_arch"/>
    <property type="match status" value="1"/>
</dbReference>
<dbReference type="NCBIfam" id="NF003058">
    <property type="entry name" value="PRK03976.1"/>
    <property type="match status" value="1"/>
</dbReference>
<dbReference type="PANTHER" id="PTHR48188:SF2">
    <property type="entry name" value="60S RIBOSOMAL PROTEIN L37A"/>
    <property type="match status" value="1"/>
</dbReference>
<dbReference type="PANTHER" id="PTHR48188">
    <property type="entry name" value="60S RIBOSOMAL PROTEIN L43"/>
    <property type="match status" value="1"/>
</dbReference>
<dbReference type="Pfam" id="PF01780">
    <property type="entry name" value="Ribosomal_L37ae"/>
    <property type="match status" value="1"/>
</dbReference>
<dbReference type="SUPFAM" id="SSF57829">
    <property type="entry name" value="Zn-binding ribosomal proteins"/>
    <property type="match status" value="1"/>
</dbReference>
<gene>
    <name type="primary">Rpl37a</name>
</gene>
<evidence type="ECO:0000250" key="1">
    <source>
        <dbReference type="UniProtKB" id="P49166"/>
    </source>
</evidence>
<evidence type="ECO:0000250" key="2">
    <source>
        <dbReference type="UniProtKB" id="P61513"/>
    </source>
</evidence>
<evidence type="ECO:0000269" key="3">
    <source>
    </source>
</evidence>
<evidence type="ECO:0000305" key="4"/>
<sequence>MAKRTKKVGIVGKYGTRYGASLRKMVKKIEISQHAKYTCSFCGKTKMKRRAVGIWHCGSCMKTVAGGAWTYNTTSAVTVKSAIRRLKELKDQ</sequence>
<reference key="1">
    <citation type="journal article" date="1989" name="Eur. J. Biochem.">
        <title>The primary structure of rat ribosomal protein L37a.</title>
        <authorList>
            <person name="Tanaka T."/>
            <person name="Aoyama Y."/>
            <person name="Chan Y.-L."/>
            <person name="Wool I.G."/>
        </authorList>
    </citation>
    <scope>NUCLEOTIDE SEQUENCE [MRNA]</scope>
    <source>
        <strain>Sprague-Dawley</strain>
    </source>
</reference>
<reference key="2">
    <citation type="journal article" date="2004" name="Genome Res.">
        <title>The status, quality, and expansion of the NIH full-length cDNA project: the Mammalian Gene Collection (MGC).</title>
        <authorList>
            <consortium name="The MGC Project Team"/>
        </authorList>
    </citation>
    <scope>NUCLEOTIDE SEQUENCE [LARGE SCALE MRNA]</scope>
    <source>
        <tissue>Spleen</tissue>
    </source>
</reference>
<reference key="3">
    <citation type="journal article" date="1979" name="J. Supramol. Struct.">
        <title>Sequence of the amino-terminal region of rat liver ribosomal proteins S4, S6, S8, L6, L7a, L18, L27, L30, L37, L37a, and L39.</title>
        <authorList>
            <person name="Wittmann-Liebold B."/>
            <person name="Geissler A.W."/>
            <person name="Lin A."/>
            <person name="Wool I.G."/>
        </authorList>
    </citation>
    <scope>PROTEIN SEQUENCE OF 2-29</scope>
</reference>